<reference key="1">
    <citation type="journal article" date="2008" name="J. Bacteriol.">
        <title>Insights into plant cell wall degradation from the genome sequence of the soil bacterium Cellvibrio japonicus.</title>
        <authorList>
            <person name="DeBoy R.T."/>
            <person name="Mongodin E.F."/>
            <person name="Fouts D.E."/>
            <person name="Tailford L.E."/>
            <person name="Khouri H."/>
            <person name="Emerson J.B."/>
            <person name="Mohamoud Y."/>
            <person name="Watkins K."/>
            <person name="Henrissat B."/>
            <person name="Gilbert H.J."/>
            <person name="Nelson K.E."/>
        </authorList>
    </citation>
    <scope>NUCLEOTIDE SEQUENCE [LARGE SCALE GENOMIC DNA]</scope>
    <source>
        <strain>Ueda107</strain>
    </source>
</reference>
<dbReference type="EC" id="3.6.5.n1" evidence="1"/>
<dbReference type="EMBL" id="CP000934">
    <property type="protein sequence ID" value="ACE83387.1"/>
    <property type="molecule type" value="Genomic_DNA"/>
</dbReference>
<dbReference type="RefSeq" id="WP_012488180.1">
    <property type="nucleotide sequence ID" value="NC_010995.1"/>
</dbReference>
<dbReference type="SMR" id="B3PLG4"/>
<dbReference type="STRING" id="498211.CJA_2584"/>
<dbReference type="KEGG" id="cja:CJA_2584"/>
<dbReference type="eggNOG" id="COG0481">
    <property type="taxonomic scope" value="Bacteria"/>
</dbReference>
<dbReference type="HOGENOM" id="CLU_009995_3_3_6"/>
<dbReference type="OrthoDB" id="9801472at2"/>
<dbReference type="Proteomes" id="UP000001036">
    <property type="component" value="Chromosome"/>
</dbReference>
<dbReference type="GO" id="GO:0005886">
    <property type="term" value="C:plasma membrane"/>
    <property type="evidence" value="ECO:0007669"/>
    <property type="project" value="UniProtKB-SubCell"/>
</dbReference>
<dbReference type="GO" id="GO:0005525">
    <property type="term" value="F:GTP binding"/>
    <property type="evidence" value="ECO:0007669"/>
    <property type="project" value="UniProtKB-UniRule"/>
</dbReference>
<dbReference type="GO" id="GO:0003924">
    <property type="term" value="F:GTPase activity"/>
    <property type="evidence" value="ECO:0007669"/>
    <property type="project" value="UniProtKB-UniRule"/>
</dbReference>
<dbReference type="GO" id="GO:0097216">
    <property type="term" value="F:guanosine tetraphosphate binding"/>
    <property type="evidence" value="ECO:0007669"/>
    <property type="project" value="UniProtKB-ARBA"/>
</dbReference>
<dbReference type="GO" id="GO:0043022">
    <property type="term" value="F:ribosome binding"/>
    <property type="evidence" value="ECO:0007669"/>
    <property type="project" value="UniProtKB-UniRule"/>
</dbReference>
<dbReference type="GO" id="GO:0003746">
    <property type="term" value="F:translation elongation factor activity"/>
    <property type="evidence" value="ECO:0007669"/>
    <property type="project" value="UniProtKB-UniRule"/>
</dbReference>
<dbReference type="GO" id="GO:0045727">
    <property type="term" value="P:positive regulation of translation"/>
    <property type="evidence" value="ECO:0007669"/>
    <property type="project" value="UniProtKB-UniRule"/>
</dbReference>
<dbReference type="CDD" id="cd03699">
    <property type="entry name" value="EF4_II"/>
    <property type="match status" value="1"/>
</dbReference>
<dbReference type="CDD" id="cd16260">
    <property type="entry name" value="EF4_III"/>
    <property type="match status" value="1"/>
</dbReference>
<dbReference type="CDD" id="cd01890">
    <property type="entry name" value="LepA"/>
    <property type="match status" value="1"/>
</dbReference>
<dbReference type="CDD" id="cd03709">
    <property type="entry name" value="lepA_C"/>
    <property type="match status" value="1"/>
</dbReference>
<dbReference type="FunFam" id="3.40.50.300:FF:000078">
    <property type="entry name" value="Elongation factor 4"/>
    <property type="match status" value="1"/>
</dbReference>
<dbReference type="FunFam" id="2.40.30.10:FF:000015">
    <property type="entry name" value="Translation factor GUF1, mitochondrial"/>
    <property type="match status" value="1"/>
</dbReference>
<dbReference type="FunFam" id="3.30.70.240:FF:000007">
    <property type="entry name" value="Translation factor GUF1, mitochondrial"/>
    <property type="match status" value="1"/>
</dbReference>
<dbReference type="FunFam" id="3.30.70.2570:FF:000001">
    <property type="entry name" value="Translation factor GUF1, mitochondrial"/>
    <property type="match status" value="1"/>
</dbReference>
<dbReference type="FunFam" id="3.30.70.870:FF:000004">
    <property type="entry name" value="Translation factor GUF1, mitochondrial"/>
    <property type="match status" value="1"/>
</dbReference>
<dbReference type="Gene3D" id="3.30.70.240">
    <property type="match status" value="1"/>
</dbReference>
<dbReference type="Gene3D" id="3.30.70.2570">
    <property type="entry name" value="Elongation factor 4, C-terminal domain"/>
    <property type="match status" value="1"/>
</dbReference>
<dbReference type="Gene3D" id="3.30.70.870">
    <property type="entry name" value="Elongation Factor G (Translational Gtpase), domain 3"/>
    <property type="match status" value="1"/>
</dbReference>
<dbReference type="Gene3D" id="3.40.50.300">
    <property type="entry name" value="P-loop containing nucleotide triphosphate hydrolases"/>
    <property type="match status" value="1"/>
</dbReference>
<dbReference type="Gene3D" id="2.40.30.10">
    <property type="entry name" value="Translation factors"/>
    <property type="match status" value="1"/>
</dbReference>
<dbReference type="HAMAP" id="MF_00071">
    <property type="entry name" value="LepA"/>
    <property type="match status" value="1"/>
</dbReference>
<dbReference type="InterPro" id="IPR006297">
    <property type="entry name" value="EF-4"/>
</dbReference>
<dbReference type="InterPro" id="IPR035647">
    <property type="entry name" value="EFG_III/V"/>
</dbReference>
<dbReference type="InterPro" id="IPR000640">
    <property type="entry name" value="EFG_V-like"/>
</dbReference>
<dbReference type="InterPro" id="IPR038363">
    <property type="entry name" value="LepA_C_sf"/>
</dbReference>
<dbReference type="InterPro" id="IPR013842">
    <property type="entry name" value="LepA_CTD"/>
</dbReference>
<dbReference type="InterPro" id="IPR035654">
    <property type="entry name" value="LepA_IV"/>
</dbReference>
<dbReference type="InterPro" id="IPR027417">
    <property type="entry name" value="P-loop_NTPase"/>
</dbReference>
<dbReference type="InterPro" id="IPR005225">
    <property type="entry name" value="Small_GTP-bd"/>
</dbReference>
<dbReference type="InterPro" id="IPR000795">
    <property type="entry name" value="T_Tr_GTP-bd_dom"/>
</dbReference>
<dbReference type="NCBIfam" id="TIGR01393">
    <property type="entry name" value="lepA"/>
    <property type="match status" value="1"/>
</dbReference>
<dbReference type="NCBIfam" id="TIGR00231">
    <property type="entry name" value="small_GTP"/>
    <property type="match status" value="1"/>
</dbReference>
<dbReference type="PANTHER" id="PTHR43512:SF4">
    <property type="entry name" value="TRANSLATION FACTOR GUF1 HOMOLOG, CHLOROPLASTIC"/>
    <property type="match status" value="1"/>
</dbReference>
<dbReference type="PANTHER" id="PTHR43512">
    <property type="entry name" value="TRANSLATION FACTOR GUF1-RELATED"/>
    <property type="match status" value="1"/>
</dbReference>
<dbReference type="Pfam" id="PF00679">
    <property type="entry name" value="EFG_C"/>
    <property type="match status" value="1"/>
</dbReference>
<dbReference type="Pfam" id="PF00009">
    <property type="entry name" value="GTP_EFTU"/>
    <property type="match status" value="1"/>
</dbReference>
<dbReference type="Pfam" id="PF06421">
    <property type="entry name" value="LepA_C"/>
    <property type="match status" value="1"/>
</dbReference>
<dbReference type="PRINTS" id="PR00315">
    <property type="entry name" value="ELONGATNFCT"/>
</dbReference>
<dbReference type="SUPFAM" id="SSF54980">
    <property type="entry name" value="EF-G C-terminal domain-like"/>
    <property type="match status" value="2"/>
</dbReference>
<dbReference type="SUPFAM" id="SSF52540">
    <property type="entry name" value="P-loop containing nucleoside triphosphate hydrolases"/>
    <property type="match status" value="1"/>
</dbReference>
<dbReference type="PROSITE" id="PS51722">
    <property type="entry name" value="G_TR_2"/>
    <property type="match status" value="1"/>
</dbReference>
<evidence type="ECO:0000255" key="1">
    <source>
        <dbReference type="HAMAP-Rule" id="MF_00071"/>
    </source>
</evidence>
<keyword id="KW-0997">Cell inner membrane</keyword>
<keyword id="KW-1003">Cell membrane</keyword>
<keyword id="KW-0342">GTP-binding</keyword>
<keyword id="KW-0378">Hydrolase</keyword>
<keyword id="KW-0472">Membrane</keyword>
<keyword id="KW-0547">Nucleotide-binding</keyword>
<keyword id="KW-0648">Protein biosynthesis</keyword>
<keyword id="KW-1185">Reference proteome</keyword>
<gene>
    <name evidence="1" type="primary">lepA</name>
    <name type="ordered locus">CJA_2584</name>
</gene>
<organism>
    <name type="scientific">Cellvibrio japonicus (strain Ueda107)</name>
    <name type="common">Pseudomonas fluorescens subsp. cellulosa</name>
    <dbReference type="NCBI Taxonomy" id="498211"/>
    <lineage>
        <taxon>Bacteria</taxon>
        <taxon>Pseudomonadati</taxon>
        <taxon>Pseudomonadota</taxon>
        <taxon>Gammaproteobacteria</taxon>
        <taxon>Cellvibrionales</taxon>
        <taxon>Cellvibrionaceae</taxon>
        <taxon>Cellvibrio</taxon>
    </lineage>
</organism>
<protein>
    <recommendedName>
        <fullName evidence="1">Elongation factor 4</fullName>
        <shortName evidence="1">EF-4</shortName>
        <ecNumber evidence="1">3.6.5.n1</ecNumber>
    </recommendedName>
    <alternativeName>
        <fullName evidence="1">Ribosomal back-translocase LepA</fullName>
    </alternativeName>
</protein>
<proteinExistence type="inferred from homology"/>
<name>LEPA_CELJU</name>
<sequence length="599" mass="65935">MTDLSHIRNFSIIAHIDHGKSTIADRFIQICGGLSDREMEAQVLDSMDLERERGITIKAHSVTLNYKARDGKTYQLNFIDTPGHVDFTYEVSRSLAACEGALLVVDAAQGVEAQSVANCYTAIEQGLEVIPVLNKMDLPQAEPDRVAQEIEDIIGLDATEAVRCSAKSGLGMEDVLEELVRLVPPPTGDVGAPLQALIIDSWFDNYLGVVSLVRVVQGTLRLKDKIIAKTIGKSQLVDGLGVFTPKPLQLKELKAGEVGFVVAGIKDIHGAPVGDTITHAQTPDVEALAGFQKIKPQVYAGMFPVSSDDFESFREALAKLTLNDASLFYEPESSDALGFGFRCGFLGMLHMEIIQERLEREYDLDLITTAPTVVYEIETAKGETIFVDNPSKLPDPGSINEMREPIVEANILVPQEHLGNVITLCVEKRGVQKDLQFTGSQVAVRYELPMNEVVTDFFDRLKSVSRGFASLDYNFLRFQPAKLVRLDVLINGDKVDALALIVHRDKSQHMGRQLVEKMKDLIPRQMFDVAIQAAIGGQVVARSTVKALRKDVLAKCYGGDATRKKKLLEKQKAGKKRMKQVGNVEIPQAAFFAVLKIDS</sequence>
<accession>B3PLG4</accession>
<comment type="function">
    <text evidence="1">Required for accurate and efficient protein synthesis under certain stress conditions. May act as a fidelity factor of the translation reaction, by catalyzing a one-codon backward translocation of tRNAs on improperly translocated ribosomes. Back-translocation proceeds from a post-translocation (POST) complex to a pre-translocation (PRE) complex, thus giving elongation factor G a second chance to translocate the tRNAs correctly. Binds to ribosomes in a GTP-dependent manner.</text>
</comment>
<comment type="catalytic activity">
    <reaction evidence="1">
        <text>GTP + H2O = GDP + phosphate + H(+)</text>
        <dbReference type="Rhea" id="RHEA:19669"/>
        <dbReference type="ChEBI" id="CHEBI:15377"/>
        <dbReference type="ChEBI" id="CHEBI:15378"/>
        <dbReference type="ChEBI" id="CHEBI:37565"/>
        <dbReference type="ChEBI" id="CHEBI:43474"/>
        <dbReference type="ChEBI" id="CHEBI:58189"/>
        <dbReference type="EC" id="3.6.5.n1"/>
    </reaction>
</comment>
<comment type="subcellular location">
    <subcellularLocation>
        <location evidence="1">Cell inner membrane</location>
        <topology evidence="1">Peripheral membrane protein</topology>
        <orientation evidence="1">Cytoplasmic side</orientation>
    </subcellularLocation>
</comment>
<comment type="similarity">
    <text evidence="1">Belongs to the TRAFAC class translation factor GTPase superfamily. Classic translation factor GTPase family. LepA subfamily.</text>
</comment>
<feature type="chain" id="PRO_1000092381" description="Elongation factor 4">
    <location>
        <begin position="1"/>
        <end position="599"/>
    </location>
</feature>
<feature type="domain" description="tr-type G">
    <location>
        <begin position="5"/>
        <end position="187"/>
    </location>
</feature>
<feature type="binding site" evidence="1">
    <location>
        <begin position="17"/>
        <end position="22"/>
    </location>
    <ligand>
        <name>GTP</name>
        <dbReference type="ChEBI" id="CHEBI:37565"/>
    </ligand>
</feature>
<feature type="binding site" evidence="1">
    <location>
        <begin position="134"/>
        <end position="137"/>
    </location>
    <ligand>
        <name>GTP</name>
        <dbReference type="ChEBI" id="CHEBI:37565"/>
    </ligand>
</feature>